<proteinExistence type="inferred from homology"/>
<gene>
    <name evidence="1" type="primary">purC</name>
    <name type="ordered locus">WD_1023</name>
</gene>
<evidence type="ECO:0000255" key="1">
    <source>
        <dbReference type="HAMAP-Rule" id="MF_00137"/>
    </source>
</evidence>
<comment type="catalytic activity">
    <reaction evidence="1">
        <text>5-amino-1-(5-phospho-D-ribosyl)imidazole-4-carboxylate + L-aspartate + ATP = (2S)-2-[5-amino-1-(5-phospho-beta-D-ribosyl)imidazole-4-carboxamido]succinate + ADP + phosphate + 2 H(+)</text>
        <dbReference type="Rhea" id="RHEA:22628"/>
        <dbReference type="ChEBI" id="CHEBI:15378"/>
        <dbReference type="ChEBI" id="CHEBI:29991"/>
        <dbReference type="ChEBI" id="CHEBI:30616"/>
        <dbReference type="ChEBI" id="CHEBI:43474"/>
        <dbReference type="ChEBI" id="CHEBI:58443"/>
        <dbReference type="ChEBI" id="CHEBI:77657"/>
        <dbReference type="ChEBI" id="CHEBI:456216"/>
        <dbReference type="EC" id="6.3.2.6"/>
    </reaction>
</comment>
<comment type="pathway">
    <text evidence="1">Purine metabolism; IMP biosynthesis via de novo pathway; 5-amino-1-(5-phospho-D-ribosyl)imidazole-4-carboxamide from 5-amino-1-(5-phospho-D-ribosyl)imidazole-4-carboxylate: step 1/2.</text>
</comment>
<comment type="similarity">
    <text evidence="1">Belongs to the SAICAR synthetase family.</text>
</comment>
<organism>
    <name type="scientific">Wolbachia pipientis wMel</name>
    <dbReference type="NCBI Taxonomy" id="163164"/>
    <lineage>
        <taxon>Bacteria</taxon>
        <taxon>Pseudomonadati</taxon>
        <taxon>Pseudomonadota</taxon>
        <taxon>Alphaproteobacteria</taxon>
        <taxon>Rickettsiales</taxon>
        <taxon>Anaplasmataceae</taxon>
        <taxon>Wolbachieae</taxon>
        <taxon>Wolbachia</taxon>
    </lineage>
</organism>
<keyword id="KW-0067">ATP-binding</keyword>
<keyword id="KW-0436">Ligase</keyword>
<keyword id="KW-0547">Nucleotide-binding</keyword>
<keyword id="KW-0658">Purine biosynthesis</keyword>
<feature type="chain" id="PRO_1000018808" description="Phosphoribosylaminoimidazole-succinocarboxamide synthase">
    <location>
        <begin position="1"/>
        <end position="240"/>
    </location>
</feature>
<dbReference type="EC" id="6.3.2.6" evidence="1"/>
<dbReference type="EMBL" id="AE017196">
    <property type="protein sequence ID" value="AAS14682.1"/>
    <property type="molecule type" value="Genomic_DNA"/>
</dbReference>
<dbReference type="RefSeq" id="WP_010081959.1">
    <property type="nucleotide sequence ID" value="NZ_OX384529.1"/>
</dbReference>
<dbReference type="SMR" id="Q73GD4"/>
<dbReference type="EnsemblBacteria" id="AAS14682">
    <property type="protein sequence ID" value="AAS14682"/>
    <property type="gene ID" value="WD_1023"/>
</dbReference>
<dbReference type="GeneID" id="70036502"/>
<dbReference type="KEGG" id="wol:WD_1023"/>
<dbReference type="eggNOG" id="COG0152">
    <property type="taxonomic scope" value="Bacteria"/>
</dbReference>
<dbReference type="UniPathway" id="UPA00074">
    <property type="reaction ID" value="UER00131"/>
</dbReference>
<dbReference type="Proteomes" id="UP000008215">
    <property type="component" value="Chromosome"/>
</dbReference>
<dbReference type="GO" id="GO:0005829">
    <property type="term" value="C:cytosol"/>
    <property type="evidence" value="ECO:0007669"/>
    <property type="project" value="TreeGrafter"/>
</dbReference>
<dbReference type="GO" id="GO:0005524">
    <property type="term" value="F:ATP binding"/>
    <property type="evidence" value="ECO:0007669"/>
    <property type="project" value="UniProtKB-KW"/>
</dbReference>
<dbReference type="GO" id="GO:0004639">
    <property type="term" value="F:phosphoribosylaminoimidazolesuccinocarboxamide synthase activity"/>
    <property type="evidence" value="ECO:0007669"/>
    <property type="project" value="UniProtKB-UniRule"/>
</dbReference>
<dbReference type="GO" id="GO:0006189">
    <property type="term" value="P:'de novo' IMP biosynthetic process"/>
    <property type="evidence" value="ECO:0007669"/>
    <property type="project" value="UniProtKB-UniRule"/>
</dbReference>
<dbReference type="GO" id="GO:0009236">
    <property type="term" value="P:cobalamin biosynthetic process"/>
    <property type="evidence" value="ECO:0007669"/>
    <property type="project" value="InterPro"/>
</dbReference>
<dbReference type="CDD" id="cd01415">
    <property type="entry name" value="SAICAR_synt_PurC"/>
    <property type="match status" value="1"/>
</dbReference>
<dbReference type="FunFam" id="3.30.470.20:FF:000006">
    <property type="entry name" value="Phosphoribosylaminoimidazole-succinocarboxamide synthase"/>
    <property type="match status" value="1"/>
</dbReference>
<dbReference type="Gene3D" id="3.30.470.20">
    <property type="entry name" value="ATP-grasp fold, B domain"/>
    <property type="match status" value="1"/>
</dbReference>
<dbReference type="Gene3D" id="3.30.200.20">
    <property type="entry name" value="Phosphorylase Kinase, domain 1"/>
    <property type="match status" value="1"/>
</dbReference>
<dbReference type="HAMAP" id="MF_00137">
    <property type="entry name" value="SAICAR_synth"/>
    <property type="match status" value="1"/>
</dbReference>
<dbReference type="InterPro" id="IPR028923">
    <property type="entry name" value="SAICAR_synt/ADE2_N"/>
</dbReference>
<dbReference type="InterPro" id="IPR033934">
    <property type="entry name" value="SAICAR_synt_PurC"/>
</dbReference>
<dbReference type="InterPro" id="IPR001636">
    <property type="entry name" value="SAICAR_synth"/>
</dbReference>
<dbReference type="InterPro" id="IPR050089">
    <property type="entry name" value="SAICAR_synthetase"/>
</dbReference>
<dbReference type="InterPro" id="IPR018236">
    <property type="entry name" value="SAICAR_synthetase_CS"/>
</dbReference>
<dbReference type="NCBIfam" id="TIGR00081">
    <property type="entry name" value="purC"/>
    <property type="match status" value="1"/>
</dbReference>
<dbReference type="PANTHER" id="PTHR43599">
    <property type="entry name" value="MULTIFUNCTIONAL PROTEIN ADE2"/>
    <property type="match status" value="1"/>
</dbReference>
<dbReference type="PANTHER" id="PTHR43599:SF3">
    <property type="entry name" value="SI:DKEY-6E2.2"/>
    <property type="match status" value="1"/>
</dbReference>
<dbReference type="Pfam" id="PF01259">
    <property type="entry name" value="SAICAR_synt"/>
    <property type="match status" value="1"/>
</dbReference>
<dbReference type="SUPFAM" id="SSF56104">
    <property type="entry name" value="SAICAR synthase-like"/>
    <property type="match status" value="1"/>
</dbReference>
<dbReference type="PROSITE" id="PS01057">
    <property type="entry name" value="SAICAR_SYNTHETASE_1"/>
    <property type="match status" value="1"/>
</dbReference>
<dbReference type="PROSITE" id="PS01058">
    <property type="entry name" value="SAICAR_SYNTHETASE_2"/>
    <property type="match status" value="1"/>
</dbReference>
<reference key="1">
    <citation type="journal article" date="2004" name="PLoS Biol.">
        <title>Phylogenomics of the reproductive parasite Wolbachia pipientis wMel: a streamlined genome overrun by mobile genetic elements.</title>
        <authorList>
            <person name="Wu M."/>
            <person name="Sun L.V."/>
            <person name="Vamathevan J.J."/>
            <person name="Riegler M."/>
            <person name="DeBoy R.T."/>
            <person name="Brownlie J.C."/>
            <person name="McGraw E.A."/>
            <person name="Martin W."/>
            <person name="Esser C."/>
            <person name="Ahmadinejad N."/>
            <person name="Wiegand C."/>
            <person name="Madupu R."/>
            <person name="Beanan M.J."/>
            <person name="Brinkac L.M."/>
            <person name="Daugherty S.C."/>
            <person name="Durkin A.S."/>
            <person name="Kolonay J.F."/>
            <person name="Nelson W.C."/>
            <person name="Mohamoud Y."/>
            <person name="Lee P."/>
            <person name="Berry K.J."/>
            <person name="Young M.B."/>
            <person name="Utterback T.R."/>
            <person name="Weidman J.F."/>
            <person name="Nierman W.C."/>
            <person name="Paulsen I.T."/>
            <person name="Nelson K.E."/>
            <person name="Tettelin H."/>
            <person name="O'Neill S.L."/>
            <person name="Eisen J.A."/>
        </authorList>
    </citation>
    <scope>NUCLEOTIDE SEQUENCE [LARGE SCALE GENOMIC DNA]</scope>
</reference>
<protein>
    <recommendedName>
        <fullName evidence="1">Phosphoribosylaminoimidazole-succinocarboxamide synthase</fullName>
        <ecNumber evidence="1">6.3.2.6</ecNumber>
    </recommendedName>
    <alternativeName>
        <fullName evidence="1">SAICAR synthetase</fullName>
    </alternativeName>
</protein>
<name>PUR7_WOLPM</name>
<accession>Q73GD4</accession>
<sequence length="240" mass="27675">MSLNKTIYEGKAKAIIETEDLSIVIQHFKDDVTAFNKEKYEIIDGKGIINNHISAFIMEKLEKAEISTHFIKTLNEREQLVKKLKIIPLEVVVRNVAAGSFCKRFNIKEGERLASPIIDFFYKNDDLADPMVSENHILYFDWLSSKEMDEVKTTTLKINEILVHLFSNASIYLVDLKLEFGRLINDSTKIVLADEISPDNCRLWDKNTYKKLDKDVFRLNLGDLKEAYLEVAKRLSVKLG</sequence>